<gene>
    <name evidence="1" type="primary">rlmL</name>
    <name type="ordered locus">Csal_1344</name>
</gene>
<comment type="function">
    <text evidence="1">Specifically methylates the guanine in position 2445 (m2G2445) and the guanine in position 2069 (m7G2069) of 23S rRNA.</text>
</comment>
<comment type="catalytic activity">
    <reaction evidence="1">
        <text>guanosine(2445) in 23S rRNA + S-adenosyl-L-methionine = N(2)-methylguanosine(2445) in 23S rRNA + S-adenosyl-L-homocysteine + H(+)</text>
        <dbReference type="Rhea" id="RHEA:42740"/>
        <dbReference type="Rhea" id="RHEA-COMP:10215"/>
        <dbReference type="Rhea" id="RHEA-COMP:10216"/>
        <dbReference type="ChEBI" id="CHEBI:15378"/>
        <dbReference type="ChEBI" id="CHEBI:57856"/>
        <dbReference type="ChEBI" id="CHEBI:59789"/>
        <dbReference type="ChEBI" id="CHEBI:74269"/>
        <dbReference type="ChEBI" id="CHEBI:74481"/>
        <dbReference type="EC" id="2.1.1.173"/>
    </reaction>
</comment>
<comment type="catalytic activity">
    <reaction evidence="1">
        <text>guanosine(2069) in 23S rRNA + S-adenosyl-L-methionine = N(2)-methylguanosine(2069) in 23S rRNA + S-adenosyl-L-homocysteine + H(+)</text>
        <dbReference type="Rhea" id="RHEA:43772"/>
        <dbReference type="Rhea" id="RHEA-COMP:10688"/>
        <dbReference type="Rhea" id="RHEA-COMP:10689"/>
        <dbReference type="ChEBI" id="CHEBI:15378"/>
        <dbReference type="ChEBI" id="CHEBI:57856"/>
        <dbReference type="ChEBI" id="CHEBI:59789"/>
        <dbReference type="ChEBI" id="CHEBI:74269"/>
        <dbReference type="ChEBI" id="CHEBI:74481"/>
        <dbReference type="EC" id="2.1.1.264"/>
    </reaction>
</comment>
<comment type="subcellular location">
    <subcellularLocation>
        <location evidence="1">Cytoplasm</location>
    </subcellularLocation>
</comment>
<comment type="similarity">
    <text evidence="1">Belongs to the methyltransferase superfamily. RlmKL family.</text>
</comment>
<name>RLMKL_CHRSD</name>
<sequence length="732" mass="81512">MNDVQSQPLTLYIACPRGLEGLLADELADFGAEVTGTTVAGVHAQADTAMAYRICLWSRLANRVVLCLLREQGIERPEALVEAARRVDWGAHLRAGSSLAVDFHGQSEHIRHTRFGAQSVKDGIVDAMRAAGRERPAVDLKTPDARIYAHLHRGRLLLGLDLVGGSLHQRGYRRDAGHAPLKENLAAALLMRADWPARARRGEPLVDPLCGAGTLLIEAALMAADIAPQLSRDYFAFEAWVGHDPDAWRELQREAQARANVGRRRVKSKLYGRDQSPPAIAAAKANAMRAGIPALIDLQGAEVAQLTRPEGVDGPGLVITNPPYGERLGELPEVVPIYTALGERLRAEFEGWQLALFTGNPDLGHRTGLRAEKQYAFKNGPLDCKLLLIPVVAQRTERETSSEGDEPQGASGATSRPGPRNDGAQMFANRLEKNRKRLKKWLKQSGERCYRLYDADMPEYALAVDVYGDRVHVQEYAPPRSVDPRQAQRRLLDALEVIPQVLGVRPESVHYKQRTRQAGKAQYAKQDASGERFEVSEGPARLWVNLRDYLDTGLFLDHRPVRRRLREMADGKRFLNLFCYTGTATVQAALGGASDSVSVDLSNTYLAWARDNFALNRLDPSRHRVVRDDCLRWLETAGSEFDLIFMDPPTFSNSKKMDAVLDVQRDHARLIELAMARLAPGGTLVFSNNQRRFVLDAAVGERFAVEDISARTFDPDFSRRPDLHHCFLIRHR</sequence>
<protein>
    <recommendedName>
        <fullName evidence="1">Ribosomal RNA large subunit methyltransferase K/L</fullName>
    </recommendedName>
    <domain>
        <recommendedName>
            <fullName evidence="1">23S rRNA m2G2445 methyltransferase</fullName>
            <ecNumber evidence="1">2.1.1.173</ecNumber>
        </recommendedName>
        <alternativeName>
            <fullName evidence="1">rRNA (guanine-N(2)-)-methyltransferase RlmL</fullName>
        </alternativeName>
    </domain>
    <domain>
        <recommendedName>
            <fullName evidence="1">23S rRNA m7G2069 methyltransferase</fullName>
            <ecNumber evidence="1">2.1.1.264</ecNumber>
        </recommendedName>
        <alternativeName>
            <fullName evidence="1">rRNA (guanine-N(7)-)-methyltransferase RlmK</fullName>
        </alternativeName>
    </domain>
</protein>
<organism>
    <name type="scientific">Chromohalobacter salexigens (strain ATCC BAA-138 / DSM 3043 / CIP 106854 / NCIMB 13768 / 1H11)</name>
    <dbReference type="NCBI Taxonomy" id="290398"/>
    <lineage>
        <taxon>Bacteria</taxon>
        <taxon>Pseudomonadati</taxon>
        <taxon>Pseudomonadota</taxon>
        <taxon>Gammaproteobacteria</taxon>
        <taxon>Oceanospirillales</taxon>
        <taxon>Halomonadaceae</taxon>
        <taxon>Chromohalobacter</taxon>
    </lineage>
</organism>
<proteinExistence type="inferred from homology"/>
<keyword id="KW-0963">Cytoplasm</keyword>
<keyword id="KW-0489">Methyltransferase</keyword>
<keyword id="KW-1185">Reference proteome</keyword>
<keyword id="KW-0694">RNA-binding</keyword>
<keyword id="KW-0698">rRNA processing</keyword>
<keyword id="KW-0949">S-adenosyl-L-methionine</keyword>
<keyword id="KW-0808">Transferase</keyword>
<reference key="1">
    <citation type="journal article" date="2011" name="Stand. Genomic Sci.">
        <title>Complete genome sequence of the halophilic and highly halotolerant Chromohalobacter salexigens type strain (1H11(T)).</title>
        <authorList>
            <person name="Copeland A."/>
            <person name="O'Connor K."/>
            <person name="Lucas S."/>
            <person name="Lapidus A."/>
            <person name="Berry K.W."/>
            <person name="Detter J.C."/>
            <person name="Del Rio T.G."/>
            <person name="Hammon N."/>
            <person name="Dalin E."/>
            <person name="Tice H."/>
            <person name="Pitluck S."/>
            <person name="Bruce D."/>
            <person name="Goodwin L."/>
            <person name="Han C."/>
            <person name="Tapia R."/>
            <person name="Saunders E."/>
            <person name="Schmutz J."/>
            <person name="Brettin T."/>
            <person name="Larimer F."/>
            <person name="Land M."/>
            <person name="Hauser L."/>
            <person name="Vargas C."/>
            <person name="Nieto J.J."/>
            <person name="Kyrpides N.C."/>
            <person name="Ivanova N."/>
            <person name="Goker M."/>
            <person name="Klenk H.P."/>
            <person name="Csonka L.N."/>
            <person name="Woyke T."/>
        </authorList>
    </citation>
    <scope>NUCLEOTIDE SEQUENCE [LARGE SCALE GENOMIC DNA]</scope>
    <source>
        <strain>ATCC BAA-138 / DSM 3043 / CIP 106854 / NCIMB 13768 / 1H11</strain>
    </source>
</reference>
<feature type="chain" id="PRO_0000366730" description="Ribosomal RNA large subunit methyltransferase K/L">
    <location>
        <begin position="1"/>
        <end position="732"/>
    </location>
</feature>
<feature type="domain" description="THUMP" evidence="1">
    <location>
        <begin position="50"/>
        <end position="162"/>
    </location>
</feature>
<feature type="region of interest" description="Disordered" evidence="2">
    <location>
        <begin position="396"/>
        <end position="424"/>
    </location>
</feature>
<dbReference type="EC" id="2.1.1.173" evidence="1"/>
<dbReference type="EC" id="2.1.1.264" evidence="1"/>
<dbReference type="EMBL" id="CP000285">
    <property type="protein sequence ID" value="ABE58699.1"/>
    <property type="molecule type" value="Genomic_DNA"/>
</dbReference>
<dbReference type="RefSeq" id="WP_011506645.1">
    <property type="nucleotide sequence ID" value="NC_007963.1"/>
</dbReference>
<dbReference type="SMR" id="Q1QXV9"/>
<dbReference type="STRING" id="290398.Csal_1344"/>
<dbReference type="GeneID" id="95334082"/>
<dbReference type="KEGG" id="csa:Csal_1344"/>
<dbReference type="eggNOG" id="COG0116">
    <property type="taxonomic scope" value="Bacteria"/>
</dbReference>
<dbReference type="eggNOG" id="COG1092">
    <property type="taxonomic scope" value="Bacteria"/>
</dbReference>
<dbReference type="HOGENOM" id="CLU_014042_2_0_6"/>
<dbReference type="OrthoDB" id="9809404at2"/>
<dbReference type="Proteomes" id="UP000000239">
    <property type="component" value="Chromosome"/>
</dbReference>
<dbReference type="GO" id="GO:0005737">
    <property type="term" value="C:cytoplasm"/>
    <property type="evidence" value="ECO:0007669"/>
    <property type="project" value="UniProtKB-SubCell"/>
</dbReference>
<dbReference type="GO" id="GO:0052915">
    <property type="term" value="F:23S rRNA (guanine(2445)-N(2))-methyltransferase activity"/>
    <property type="evidence" value="ECO:0007669"/>
    <property type="project" value="UniProtKB-UniRule"/>
</dbReference>
<dbReference type="GO" id="GO:0003723">
    <property type="term" value="F:RNA binding"/>
    <property type="evidence" value="ECO:0007669"/>
    <property type="project" value="UniProtKB-KW"/>
</dbReference>
<dbReference type="GO" id="GO:0070043">
    <property type="term" value="F:rRNA (guanine-N7-)-methyltransferase activity"/>
    <property type="evidence" value="ECO:0007669"/>
    <property type="project" value="UniProtKB-UniRule"/>
</dbReference>
<dbReference type="CDD" id="cd02440">
    <property type="entry name" value="AdoMet_MTases"/>
    <property type="match status" value="1"/>
</dbReference>
<dbReference type="CDD" id="cd11715">
    <property type="entry name" value="THUMP_AdoMetMT"/>
    <property type="match status" value="1"/>
</dbReference>
<dbReference type="Gene3D" id="3.30.2130.30">
    <property type="match status" value="1"/>
</dbReference>
<dbReference type="Gene3D" id="3.30.750.80">
    <property type="entry name" value="RNA methyltransferase domain (HRMD) like"/>
    <property type="match status" value="1"/>
</dbReference>
<dbReference type="Gene3D" id="3.40.50.150">
    <property type="entry name" value="Vaccinia Virus protein VP39"/>
    <property type="match status" value="2"/>
</dbReference>
<dbReference type="HAMAP" id="MF_01858">
    <property type="entry name" value="23SrRNA_methyltr_KL"/>
    <property type="match status" value="1"/>
</dbReference>
<dbReference type="InterPro" id="IPR017244">
    <property type="entry name" value="23SrRNA_methyltr_KL"/>
</dbReference>
<dbReference type="InterPro" id="IPR002052">
    <property type="entry name" value="DNA_methylase_N6_adenine_CS"/>
</dbReference>
<dbReference type="InterPro" id="IPR000241">
    <property type="entry name" value="RlmKL-like_Mtase"/>
</dbReference>
<dbReference type="InterPro" id="IPR054170">
    <property type="entry name" value="RlmL_1st"/>
</dbReference>
<dbReference type="InterPro" id="IPR019614">
    <property type="entry name" value="SAM-dep_methyl-trfase"/>
</dbReference>
<dbReference type="InterPro" id="IPR029063">
    <property type="entry name" value="SAM-dependent_MTases_sf"/>
</dbReference>
<dbReference type="InterPro" id="IPR004114">
    <property type="entry name" value="THUMP_dom"/>
</dbReference>
<dbReference type="NCBIfam" id="NF008748">
    <property type="entry name" value="PRK11783.1"/>
    <property type="match status" value="1"/>
</dbReference>
<dbReference type="PANTHER" id="PTHR47313">
    <property type="entry name" value="RIBOSOMAL RNA LARGE SUBUNIT METHYLTRANSFERASE K/L"/>
    <property type="match status" value="1"/>
</dbReference>
<dbReference type="PANTHER" id="PTHR47313:SF1">
    <property type="entry name" value="RIBOSOMAL RNA LARGE SUBUNIT METHYLTRANSFERASE K_L"/>
    <property type="match status" value="1"/>
</dbReference>
<dbReference type="Pfam" id="PF10672">
    <property type="entry name" value="Methyltrans_SAM"/>
    <property type="match status" value="1"/>
</dbReference>
<dbReference type="Pfam" id="PF22020">
    <property type="entry name" value="RlmL_1st"/>
    <property type="match status" value="1"/>
</dbReference>
<dbReference type="Pfam" id="PF02926">
    <property type="entry name" value="THUMP"/>
    <property type="match status" value="1"/>
</dbReference>
<dbReference type="Pfam" id="PF01170">
    <property type="entry name" value="UPF0020"/>
    <property type="match status" value="1"/>
</dbReference>
<dbReference type="PIRSF" id="PIRSF037618">
    <property type="entry name" value="RNA_Mtase_bacteria_prd"/>
    <property type="match status" value="1"/>
</dbReference>
<dbReference type="SMART" id="SM00981">
    <property type="entry name" value="THUMP"/>
    <property type="match status" value="1"/>
</dbReference>
<dbReference type="SUPFAM" id="SSF53335">
    <property type="entry name" value="S-adenosyl-L-methionine-dependent methyltransferases"/>
    <property type="match status" value="2"/>
</dbReference>
<dbReference type="PROSITE" id="PS51165">
    <property type="entry name" value="THUMP"/>
    <property type="match status" value="1"/>
</dbReference>
<accession>Q1QXV9</accession>
<evidence type="ECO:0000255" key="1">
    <source>
        <dbReference type="HAMAP-Rule" id="MF_01858"/>
    </source>
</evidence>
<evidence type="ECO:0000256" key="2">
    <source>
        <dbReference type="SAM" id="MobiDB-lite"/>
    </source>
</evidence>